<dbReference type="EMBL" id="LC413193">
    <property type="protein sequence ID" value="BBF66844.1"/>
    <property type="molecule type" value="Genomic_DNA"/>
</dbReference>
<dbReference type="RefSeq" id="YP_009817983.1">
    <property type="nucleotide sequence ID" value="NC_048129.1"/>
</dbReference>
<dbReference type="SMR" id="A0A3S5IBH4"/>
<dbReference type="GeneID" id="55009315"/>
<dbReference type="Proteomes" id="UP000281986">
    <property type="component" value="Genome"/>
</dbReference>
<dbReference type="GO" id="GO:0098015">
    <property type="term" value="C:virus tail"/>
    <property type="evidence" value="ECO:0007669"/>
    <property type="project" value="UniProtKB-KW"/>
</dbReference>
<dbReference type="GO" id="GO:0098671">
    <property type="term" value="P:adhesion receptor-mediated virion attachment to host cell"/>
    <property type="evidence" value="ECO:0007669"/>
    <property type="project" value="UniProtKB-KW"/>
</dbReference>
<dbReference type="GO" id="GO:0098994">
    <property type="term" value="P:symbiont entry into host cell via disruption of host cell envelope"/>
    <property type="evidence" value="ECO:0007669"/>
    <property type="project" value="UniProtKB-KW"/>
</dbReference>
<dbReference type="GO" id="GO:0098996">
    <property type="term" value="P:symbiont entry into host cell via disruption of host cell glycocalyx"/>
    <property type="evidence" value="ECO:0000314"/>
    <property type="project" value="UniProtKB"/>
</dbReference>
<dbReference type="InterPro" id="IPR005604">
    <property type="entry name" value="Phage_T7_tail_fibre-like_N"/>
</dbReference>
<dbReference type="Pfam" id="PF03906">
    <property type="entry name" value="Phage_T7_tail"/>
    <property type="match status" value="1"/>
</dbReference>
<accession>A0A3S5IBH4</accession>
<reference key="1">
    <citation type="journal article" date="2019" name="Microb. Biotechnol.">
        <title>Identification of three podoviruses infecting Klebsiella encoding capsule depolymerases that digest specific capsular types.</title>
        <authorList>
            <person name="Pan Y.J."/>
            <person name="Lin T.L."/>
            <person name="Chen Y.Y."/>
            <person name="Lai P.H."/>
            <person name="Tsai Y.T."/>
            <person name="Hsu C.R."/>
            <person name="Hsieh P.F."/>
            <person name="Lin Y.T."/>
            <person name="Wang J.T."/>
        </authorList>
    </citation>
    <scope>NUCLEOTIDE SEQUENCE [LARGE SCALE GENOMIC DNA]</scope>
    <scope>FUNCTION</scope>
</reference>
<reference key="2">
    <citation type="journal article" date="2019" name="Front. Microbiol.">
        <title>Modeling the Architecture of Depolymerase-Containing Receptor Binding Proteins in Klebsiella Phages.</title>
        <authorList>
            <person name="Latka A."/>
            <person name="Leiman P.G."/>
            <person name="Drulis-Kawa Z."/>
            <person name="Briers Y."/>
        </authorList>
    </citation>
    <scope>REVIEW</scope>
</reference>
<organismHost>
    <name type="scientific">Klebsiella pneumoniae</name>
    <dbReference type="NCBI Taxonomy" id="573"/>
</organismHost>
<comment type="function">
    <text evidence="3 6">Functions as a receptor binding protein (RBP) and probably mediates the attachment to the host capsular exopolysaccharides (Probable). Displays a depolymerase activity that specifically degrades the KN1-type polysaccharides of Klebsiella pneumoniae capsule, which allows the phage to reach the host cell membrane and bind the entry receptor (PubMed:30706654).</text>
</comment>
<comment type="subunit">
    <text evidence="2">Homotrimer.</text>
</comment>
<comment type="subcellular location">
    <subcellularLocation>
        <location evidence="5">Virion</location>
    </subcellularLocation>
    <text evidence="5">Tail appendage.</text>
</comment>
<comment type="domain">
    <text evidence="1 5">The N-terminus anchors the RBP to the virion (By similarity). The central part and C-terminus probably binds and degrades the host exopolysaccharides (Probable).</text>
</comment>
<comment type="similarity">
    <text evidence="5">In the N-terminal section; belongs to the Teseptimavirus fiber family.</text>
</comment>
<proteinExistence type="inferred from homology"/>
<protein>
    <recommendedName>
        <fullName evidence="5">Depolymerase, capsule KN1-specific</fullName>
    </recommendedName>
    <alternativeName>
        <fullName evidence="4">KN1dep</fullName>
    </alternativeName>
    <alternativeName>
        <fullName evidence="5">Probable tail spike protein</fullName>
    </alternativeName>
</protein>
<feature type="chain" id="PRO_0000458720" description="Depolymerase, capsule KN1-specific">
    <location>
        <begin position="1"/>
        <end position="820"/>
    </location>
</feature>
<name>DEPOL_BPKN1</name>
<sequence>MMNQDIKTIIQYPVGDVEFDIPFDYLSRKFVRVYLVSPLNRRQLNNITEYRYVSRTRIKLLVETAGFNLIEIRRFTSASERVVDFSDGSVLRATDLNVSQLQSAHIAEEARDAAMLTISPADDGSLDASGKVIKNVGTPVQSSDAATKGYVDTAVSPLATTIEANFMRTLRTSGRSIRELPGASEVAGMLLGFNGEGDPVPVVAGEGTASDVMLKLAGTTGLSYIGGVGYVTPEMMTVDGKTLVRGLGQDHVRFIQKAIDEGHRRNVPVILSGGYEVYETLHDAPLPRDDGTAYPEWVANGGDSNIRPEEQLYQKAHLRLYNNSVILGAGSQIATIRSTWARSTSAVGLTSPIMWYIEGPLGNRGTVSYVLKGIKTIGAYIGRYVVGISYRSVEDDLEFAGCGIAGVKQGEEQTIHRKIVITAYAGDVTGGWWLQRNNAYGAKYMPPYTDTDVWLLGWCDSSTYEYLSYTGYDYDGRDALVHDWISEWFDTYIFKTANSRKVSEGGRLTYQSANPYPLPTLKGITGRARYITSRYSRQNALNVINTLKTLITIRAPGYMDNSTQSCRILNAMIESVGLIRRTSGANAGNYFGIDVVDKWGADTGVWGLEGTGILEKQLVVFLRPGVPCTNAVVATGAGQIFESWTTTNAQRRLLALRDWNPATQVQTYRYDFRTDYALMRPTRYYTDGPLWNYSKGTSTPTVAVNGSTIAVQKAVTNWYRLGDIMRCNIYVEINSITLQGNSELTVTTPSFNGSWEVAGQGIGKVYLSTLTGGVTLTPVIQQGGNVVRLRKGSSPEVYAFEAGTYNNVVLIIGIDYVPLS</sequence>
<organism>
    <name type="scientific">Klebsiella phage KN1-1</name>
    <name type="common">Bacteriophage KN1-1</name>
    <dbReference type="NCBI Taxonomy" id="2282629"/>
    <lineage>
        <taxon>Viruses</taxon>
        <taxon>Duplodnaviria</taxon>
        <taxon>Heunggongvirae</taxon>
        <taxon>Uroviricota</taxon>
        <taxon>Caudoviricetes</taxon>
        <taxon>Autographiviridae</taxon>
        <taxon>Studiervirinae</taxon>
        <taxon>Przondovirus</taxon>
        <taxon>Przondovirus KN11</taxon>
    </lineage>
</organism>
<evidence type="ECO:0000250" key="1">
    <source>
        <dbReference type="UniProtKB" id="D1L2X0"/>
    </source>
</evidence>
<evidence type="ECO:0000250" key="2">
    <source>
        <dbReference type="UniProtKB" id="P03748"/>
    </source>
</evidence>
<evidence type="ECO:0000269" key="3">
    <source>
    </source>
</evidence>
<evidence type="ECO:0000303" key="4">
    <source>
    </source>
</evidence>
<evidence type="ECO:0000305" key="5"/>
<evidence type="ECO:0000305" key="6">
    <source>
    </source>
</evidence>
<keyword id="KW-1238">Degradation of host capsule during virus entry</keyword>
<keyword id="KW-1235">Degradation of host cell envelope components during virus entry</keyword>
<keyword id="KW-0945">Host-virus interaction</keyword>
<keyword id="KW-1233">Viral attachment to host adhesion receptor</keyword>
<keyword id="KW-1161">Viral attachment to host cell</keyword>
<keyword id="KW-1227">Viral tail protein</keyword>
<keyword id="KW-0946">Virion</keyword>
<keyword id="KW-1160">Virus entry into host cell</keyword>